<dbReference type="EMBL" id="CP000896">
    <property type="protein sequence ID" value="ABX80812.1"/>
    <property type="molecule type" value="Genomic_DNA"/>
</dbReference>
<dbReference type="RefSeq" id="WP_012242143.1">
    <property type="nucleotide sequence ID" value="NC_010163.1"/>
</dbReference>
<dbReference type="SMR" id="A9NEN2"/>
<dbReference type="STRING" id="441768.ACL_0186"/>
<dbReference type="GeneID" id="41338378"/>
<dbReference type="KEGG" id="acl:ACL_0186"/>
<dbReference type="eggNOG" id="COG0049">
    <property type="taxonomic scope" value="Bacteria"/>
</dbReference>
<dbReference type="HOGENOM" id="CLU_072226_1_1_14"/>
<dbReference type="OrthoDB" id="9807653at2"/>
<dbReference type="Proteomes" id="UP000008558">
    <property type="component" value="Chromosome"/>
</dbReference>
<dbReference type="GO" id="GO:0015935">
    <property type="term" value="C:small ribosomal subunit"/>
    <property type="evidence" value="ECO:0007669"/>
    <property type="project" value="InterPro"/>
</dbReference>
<dbReference type="GO" id="GO:0019843">
    <property type="term" value="F:rRNA binding"/>
    <property type="evidence" value="ECO:0007669"/>
    <property type="project" value="UniProtKB-UniRule"/>
</dbReference>
<dbReference type="GO" id="GO:0003735">
    <property type="term" value="F:structural constituent of ribosome"/>
    <property type="evidence" value="ECO:0007669"/>
    <property type="project" value="InterPro"/>
</dbReference>
<dbReference type="GO" id="GO:0000049">
    <property type="term" value="F:tRNA binding"/>
    <property type="evidence" value="ECO:0007669"/>
    <property type="project" value="UniProtKB-UniRule"/>
</dbReference>
<dbReference type="GO" id="GO:0006412">
    <property type="term" value="P:translation"/>
    <property type="evidence" value="ECO:0007669"/>
    <property type="project" value="UniProtKB-UniRule"/>
</dbReference>
<dbReference type="CDD" id="cd14869">
    <property type="entry name" value="uS7_Bacteria"/>
    <property type="match status" value="1"/>
</dbReference>
<dbReference type="FunFam" id="1.10.455.10:FF:000001">
    <property type="entry name" value="30S ribosomal protein S7"/>
    <property type="match status" value="1"/>
</dbReference>
<dbReference type="Gene3D" id="1.10.455.10">
    <property type="entry name" value="Ribosomal protein S7 domain"/>
    <property type="match status" value="1"/>
</dbReference>
<dbReference type="HAMAP" id="MF_00480_B">
    <property type="entry name" value="Ribosomal_uS7_B"/>
    <property type="match status" value="1"/>
</dbReference>
<dbReference type="InterPro" id="IPR000235">
    <property type="entry name" value="Ribosomal_uS7"/>
</dbReference>
<dbReference type="InterPro" id="IPR005717">
    <property type="entry name" value="Ribosomal_uS7_bac/org-type"/>
</dbReference>
<dbReference type="InterPro" id="IPR020606">
    <property type="entry name" value="Ribosomal_uS7_CS"/>
</dbReference>
<dbReference type="InterPro" id="IPR023798">
    <property type="entry name" value="Ribosomal_uS7_dom"/>
</dbReference>
<dbReference type="InterPro" id="IPR036823">
    <property type="entry name" value="Ribosomal_uS7_dom_sf"/>
</dbReference>
<dbReference type="NCBIfam" id="TIGR01029">
    <property type="entry name" value="rpsG_bact"/>
    <property type="match status" value="1"/>
</dbReference>
<dbReference type="PANTHER" id="PTHR11205">
    <property type="entry name" value="RIBOSOMAL PROTEIN S7"/>
    <property type="match status" value="1"/>
</dbReference>
<dbReference type="Pfam" id="PF00177">
    <property type="entry name" value="Ribosomal_S7"/>
    <property type="match status" value="1"/>
</dbReference>
<dbReference type="PIRSF" id="PIRSF002122">
    <property type="entry name" value="RPS7p_RPS7a_RPS5e_RPS7o"/>
    <property type="match status" value="1"/>
</dbReference>
<dbReference type="SUPFAM" id="SSF47973">
    <property type="entry name" value="Ribosomal protein S7"/>
    <property type="match status" value="1"/>
</dbReference>
<dbReference type="PROSITE" id="PS00052">
    <property type="entry name" value="RIBOSOMAL_S7"/>
    <property type="match status" value="1"/>
</dbReference>
<organism>
    <name type="scientific">Acholeplasma laidlawii (strain PG-8A)</name>
    <dbReference type="NCBI Taxonomy" id="441768"/>
    <lineage>
        <taxon>Bacteria</taxon>
        <taxon>Bacillati</taxon>
        <taxon>Mycoplasmatota</taxon>
        <taxon>Mollicutes</taxon>
        <taxon>Acholeplasmatales</taxon>
        <taxon>Acholeplasmataceae</taxon>
        <taxon>Acholeplasma</taxon>
    </lineage>
</organism>
<protein>
    <recommendedName>
        <fullName evidence="1">Small ribosomal subunit protein uS7</fullName>
    </recommendedName>
    <alternativeName>
        <fullName evidence="2">30S ribosomal protein S7</fullName>
    </alternativeName>
</protein>
<keyword id="KW-1185">Reference proteome</keyword>
<keyword id="KW-0687">Ribonucleoprotein</keyword>
<keyword id="KW-0689">Ribosomal protein</keyword>
<keyword id="KW-0694">RNA-binding</keyword>
<keyword id="KW-0699">rRNA-binding</keyword>
<keyword id="KW-0820">tRNA-binding</keyword>
<evidence type="ECO:0000255" key="1">
    <source>
        <dbReference type="HAMAP-Rule" id="MF_00480"/>
    </source>
</evidence>
<evidence type="ECO:0000305" key="2"/>
<comment type="function">
    <text evidence="1">One of the primary rRNA binding proteins, it binds directly to 16S rRNA where it nucleates assembly of the head domain of the 30S subunit. Is located at the subunit interface close to the decoding center, probably blocks exit of the E-site tRNA.</text>
</comment>
<comment type="subunit">
    <text evidence="1">Part of the 30S ribosomal subunit. Contacts proteins S9 and S11.</text>
</comment>
<comment type="similarity">
    <text evidence="1">Belongs to the universal ribosomal protein uS7 family.</text>
</comment>
<sequence length="156" mass="17875">MPRKGHIVKRDVLPDPIYNSKLITRIVNTIMEDGKKGTAQGILYGALNRIKDQTGREAIDVFNEALNNISPILEVRARRIGGQNYQVPVEVRPERRQALALRWLVQYAKKRNEKTMEERLAKEILDASQGTGAAVKKREEVHKMAEANKAFAHYRW</sequence>
<name>RS7_ACHLI</name>
<gene>
    <name evidence="1" type="primary">rpsG</name>
    <name type="ordered locus">ACL_0186</name>
</gene>
<reference key="1">
    <citation type="journal article" date="2011" name="J. Bacteriol.">
        <title>Complete genome and proteome of Acholeplasma laidlawii.</title>
        <authorList>
            <person name="Lazarev V.N."/>
            <person name="Levitskii S.A."/>
            <person name="Basovskii Y.I."/>
            <person name="Chukin M.M."/>
            <person name="Akopian T.A."/>
            <person name="Vereshchagin V.V."/>
            <person name="Kostrjukova E.S."/>
            <person name="Kovaleva G.Y."/>
            <person name="Kazanov M.D."/>
            <person name="Malko D.B."/>
            <person name="Vitreschak A.G."/>
            <person name="Sernova N.V."/>
            <person name="Gelfand M.S."/>
            <person name="Demina I.A."/>
            <person name="Serebryakova M.V."/>
            <person name="Galyamina M.A."/>
            <person name="Vtyurin N.N."/>
            <person name="Rogov S.I."/>
            <person name="Alexeev D.G."/>
            <person name="Ladygina V.G."/>
            <person name="Govorun V.M."/>
        </authorList>
    </citation>
    <scope>NUCLEOTIDE SEQUENCE [LARGE SCALE GENOMIC DNA]</scope>
    <source>
        <strain>PG-8A</strain>
    </source>
</reference>
<accession>A9NEN2</accession>
<feature type="chain" id="PRO_1000081268" description="Small ribosomal subunit protein uS7">
    <location>
        <begin position="1"/>
        <end position="156"/>
    </location>
</feature>
<proteinExistence type="inferred from homology"/>